<keyword id="KW-0963">Cytoplasm</keyword>
<keyword id="KW-0285">Flavoprotein</keyword>
<keyword id="KW-0288">FMN</keyword>
<keyword id="KW-0413">Isomerase</keyword>
<keyword id="KW-0414">Isoprene biosynthesis</keyword>
<keyword id="KW-0460">Magnesium</keyword>
<keyword id="KW-0479">Metal-binding</keyword>
<keyword id="KW-0521">NADP</keyword>
<keyword id="KW-1185">Reference proteome</keyword>
<sequence length="352" mass="37966">MGIDKRKDDHIYLASSELSQIGSAWFEEVVLIHNALPEIDLSEVDLTTRFLGAPVKAPFGIGAMTGGTELAGKINAELAKAAEEFGIPIYVGSQRIALVKPEVKWTFEVVKQNAPHVPKVANLGAPQLAELGERELEEWVVQAIDMIDAYAIAIHLNAAQEVVQPEGEPRFKGVLEKLKIVKRAAGKPLIVKETGNGISKEVAARLSGIADAIDVGGFGGTSFVAIEGARAKESPLQKRLAETYKWWGIPTAASICEVKSAYAGYLIASGGIRSGLDGAKAIALGANFFTMSQPLLKAALDGRLREEIAMIIAELKTAMFLTGARTVQELALVPRVYGPRLRNWIEQRRLTC</sequence>
<organism>
    <name type="scientific">Pyrobaculum aerophilum (strain ATCC 51768 / DSM 7523 / JCM 9630 / CIP 104966 / NBRC 100827 / IM2)</name>
    <dbReference type="NCBI Taxonomy" id="178306"/>
    <lineage>
        <taxon>Archaea</taxon>
        <taxon>Thermoproteota</taxon>
        <taxon>Thermoprotei</taxon>
        <taxon>Thermoproteales</taxon>
        <taxon>Thermoproteaceae</taxon>
        <taxon>Pyrobaculum</taxon>
    </lineage>
</organism>
<evidence type="ECO:0000255" key="1">
    <source>
        <dbReference type="HAMAP-Rule" id="MF_00354"/>
    </source>
</evidence>
<proteinExistence type="inferred from homology"/>
<gene>
    <name evidence="1" type="primary">fni</name>
    <name type="ordered locus">PAE0801</name>
</gene>
<accession>Q8ZYF6</accession>
<reference key="1">
    <citation type="journal article" date="2002" name="Proc. Natl. Acad. Sci. U.S.A.">
        <title>Genome sequence of the hyperthermophilic crenarchaeon Pyrobaculum aerophilum.</title>
        <authorList>
            <person name="Fitz-Gibbon S.T."/>
            <person name="Ladner H."/>
            <person name="Kim U.-J."/>
            <person name="Stetter K.O."/>
            <person name="Simon M.I."/>
            <person name="Miller J.H."/>
        </authorList>
    </citation>
    <scope>NUCLEOTIDE SEQUENCE [LARGE SCALE GENOMIC DNA]</scope>
    <source>
        <strain>ATCC 51768 / DSM 7523 / JCM 9630 / CIP 104966 / NBRC 100827 / IM2</strain>
    </source>
</reference>
<feature type="chain" id="PRO_0000134450" description="Isopentenyl-diphosphate delta-isomerase">
    <location>
        <begin position="1"/>
        <end position="352"/>
    </location>
</feature>
<feature type="binding site" evidence="1">
    <location>
        <begin position="6"/>
        <end position="7"/>
    </location>
    <ligand>
        <name>substrate</name>
    </ligand>
</feature>
<feature type="binding site" evidence="1">
    <location>
        <begin position="63"/>
        <end position="65"/>
    </location>
    <ligand>
        <name>FMN</name>
        <dbReference type="ChEBI" id="CHEBI:58210"/>
    </ligand>
</feature>
<feature type="binding site" evidence="1">
    <location>
        <begin position="93"/>
        <end position="95"/>
    </location>
    <ligand>
        <name>substrate</name>
    </ligand>
</feature>
<feature type="binding site" evidence="1">
    <location>
        <position position="93"/>
    </location>
    <ligand>
        <name>FMN</name>
        <dbReference type="ChEBI" id="CHEBI:58210"/>
    </ligand>
</feature>
<feature type="binding site" evidence="1">
    <location>
        <position position="122"/>
    </location>
    <ligand>
        <name>FMN</name>
        <dbReference type="ChEBI" id="CHEBI:58210"/>
    </ligand>
</feature>
<feature type="binding site" evidence="1">
    <location>
        <position position="160"/>
    </location>
    <ligand>
        <name>substrate</name>
    </ligand>
</feature>
<feature type="binding site" evidence="1">
    <location>
        <position position="161"/>
    </location>
    <ligand>
        <name>Mg(2+)</name>
        <dbReference type="ChEBI" id="CHEBI:18420"/>
    </ligand>
</feature>
<feature type="binding site" evidence="1">
    <location>
        <position position="192"/>
    </location>
    <ligand>
        <name>FMN</name>
        <dbReference type="ChEBI" id="CHEBI:58210"/>
    </ligand>
</feature>
<feature type="binding site" evidence="1">
    <location>
        <position position="221"/>
    </location>
    <ligand>
        <name>FMN</name>
        <dbReference type="ChEBI" id="CHEBI:58210"/>
    </ligand>
</feature>
<feature type="binding site" evidence="1">
    <location>
        <begin position="271"/>
        <end position="273"/>
    </location>
    <ligand>
        <name>FMN</name>
        <dbReference type="ChEBI" id="CHEBI:58210"/>
    </ligand>
</feature>
<feature type="binding site" evidence="1">
    <location>
        <begin position="292"/>
        <end position="293"/>
    </location>
    <ligand>
        <name>FMN</name>
        <dbReference type="ChEBI" id="CHEBI:58210"/>
    </ligand>
</feature>
<comment type="function">
    <text evidence="1">Involved in the biosynthesis of isoprenoids. Catalyzes the 1,3-allylic rearrangement of the homoallylic substrate isopentenyl (IPP) to its allylic isomer, dimethylallyl diphosphate (DMAPP).</text>
</comment>
<comment type="catalytic activity">
    <reaction evidence="1">
        <text>isopentenyl diphosphate = dimethylallyl diphosphate</text>
        <dbReference type="Rhea" id="RHEA:23284"/>
        <dbReference type="ChEBI" id="CHEBI:57623"/>
        <dbReference type="ChEBI" id="CHEBI:128769"/>
        <dbReference type="EC" id="5.3.3.2"/>
    </reaction>
</comment>
<comment type="cofactor">
    <cofactor evidence="1">
        <name>FMN</name>
        <dbReference type="ChEBI" id="CHEBI:58210"/>
    </cofactor>
</comment>
<comment type="cofactor">
    <cofactor evidence="1">
        <name>NADPH</name>
        <dbReference type="ChEBI" id="CHEBI:57783"/>
    </cofactor>
</comment>
<comment type="cofactor">
    <cofactor evidence="1">
        <name>Mg(2+)</name>
        <dbReference type="ChEBI" id="CHEBI:18420"/>
    </cofactor>
</comment>
<comment type="subunit">
    <text evidence="1">Homooctamer. Dimer of tetramers.</text>
</comment>
<comment type="subcellular location">
    <subcellularLocation>
        <location evidence="1">Cytoplasm</location>
    </subcellularLocation>
</comment>
<comment type="similarity">
    <text evidence="1">Belongs to the IPP isomerase type 2 family.</text>
</comment>
<name>IDI2_PYRAE</name>
<dbReference type="EC" id="5.3.3.2" evidence="1"/>
<dbReference type="EMBL" id="AE009441">
    <property type="protein sequence ID" value="AAL63037.1"/>
    <property type="molecule type" value="Genomic_DNA"/>
</dbReference>
<dbReference type="RefSeq" id="WP_011007509.1">
    <property type="nucleotide sequence ID" value="NC_003364.1"/>
</dbReference>
<dbReference type="SMR" id="Q8ZYF6"/>
<dbReference type="FunCoup" id="Q8ZYF6">
    <property type="interactions" value="12"/>
</dbReference>
<dbReference type="STRING" id="178306.PAE0801"/>
<dbReference type="EnsemblBacteria" id="AAL63037">
    <property type="protein sequence ID" value="AAL63037"/>
    <property type="gene ID" value="PAE0801"/>
</dbReference>
<dbReference type="GeneID" id="1465265"/>
<dbReference type="KEGG" id="pai:PAE0801"/>
<dbReference type="PATRIC" id="fig|178306.9.peg.586"/>
<dbReference type="eggNOG" id="arCOG00613">
    <property type="taxonomic scope" value="Archaea"/>
</dbReference>
<dbReference type="HOGENOM" id="CLU_065515_1_0_2"/>
<dbReference type="InParanoid" id="Q8ZYF6"/>
<dbReference type="Proteomes" id="UP000002439">
    <property type="component" value="Chromosome"/>
</dbReference>
<dbReference type="GO" id="GO:0005737">
    <property type="term" value="C:cytoplasm"/>
    <property type="evidence" value="ECO:0007669"/>
    <property type="project" value="UniProtKB-SubCell"/>
</dbReference>
<dbReference type="GO" id="GO:0010181">
    <property type="term" value="F:FMN binding"/>
    <property type="evidence" value="ECO:0007669"/>
    <property type="project" value="UniProtKB-UniRule"/>
</dbReference>
<dbReference type="GO" id="GO:0004452">
    <property type="term" value="F:isopentenyl-diphosphate delta-isomerase activity"/>
    <property type="evidence" value="ECO:0007669"/>
    <property type="project" value="UniProtKB-UniRule"/>
</dbReference>
<dbReference type="GO" id="GO:0000287">
    <property type="term" value="F:magnesium ion binding"/>
    <property type="evidence" value="ECO:0007669"/>
    <property type="project" value="UniProtKB-UniRule"/>
</dbReference>
<dbReference type="GO" id="GO:0070402">
    <property type="term" value="F:NADPH binding"/>
    <property type="evidence" value="ECO:0007669"/>
    <property type="project" value="UniProtKB-UniRule"/>
</dbReference>
<dbReference type="GO" id="GO:0016491">
    <property type="term" value="F:oxidoreductase activity"/>
    <property type="evidence" value="ECO:0007669"/>
    <property type="project" value="InterPro"/>
</dbReference>
<dbReference type="GO" id="GO:0008299">
    <property type="term" value="P:isoprenoid biosynthetic process"/>
    <property type="evidence" value="ECO:0007669"/>
    <property type="project" value="UniProtKB-UniRule"/>
</dbReference>
<dbReference type="CDD" id="cd02811">
    <property type="entry name" value="IDI-2_FMN"/>
    <property type="match status" value="1"/>
</dbReference>
<dbReference type="Gene3D" id="3.20.20.70">
    <property type="entry name" value="Aldolase class I"/>
    <property type="match status" value="1"/>
</dbReference>
<dbReference type="HAMAP" id="MF_00354">
    <property type="entry name" value="Idi_2"/>
    <property type="match status" value="1"/>
</dbReference>
<dbReference type="InterPro" id="IPR013785">
    <property type="entry name" value="Aldolase_TIM"/>
</dbReference>
<dbReference type="InterPro" id="IPR000262">
    <property type="entry name" value="FMN-dep_DH"/>
</dbReference>
<dbReference type="InterPro" id="IPR011179">
    <property type="entry name" value="IPdP_isomerase"/>
</dbReference>
<dbReference type="NCBIfam" id="TIGR02151">
    <property type="entry name" value="IPP_isom_2"/>
    <property type="match status" value="1"/>
</dbReference>
<dbReference type="PANTHER" id="PTHR43665">
    <property type="entry name" value="ISOPENTENYL-DIPHOSPHATE DELTA-ISOMERASE"/>
    <property type="match status" value="1"/>
</dbReference>
<dbReference type="PANTHER" id="PTHR43665:SF1">
    <property type="entry name" value="ISOPENTENYL-DIPHOSPHATE DELTA-ISOMERASE"/>
    <property type="match status" value="1"/>
</dbReference>
<dbReference type="Pfam" id="PF01070">
    <property type="entry name" value="FMN_dh"/>
    <property type="match status" value="2"/>
</dbReference>
<dbReference type="PIRSF" id="PIRSF003314">
    <property type="entry name" value="IPP_isomerase"/>
    <property type="match status" value="1"/>
</dbReference>
<dbReference type="SUPFAM" id="SSF51395">
    <property type="entry name" value="FMN-linked oxidoreductases"/>
    <property type="match status" value="1"/>
</dbReference>
<protein>
    <recommendedName>
        <fullName evidence="1">Isopentenyl-diphosphate delta-isomerase</fullName>
        <shortName evidence="1">IPP isomerase</shortName>
        <ecNumber evidence="1">5.3.3.2</ecNumber>
    </recommendedName>
    <alternativeName>
        <fullName evidence="1">Isopentenyl diphosphate:dimethylallyl diphosphate isomerase</fullName>
    </alternativeName>
    <alternativeName>
        <fullName evidence="1">Isopentenyl pyrophosphate isomerase</fullName>
    </alternativeName>
    <alternativeName>
        <fullName evidence="1">Type 2 isopentenyl diphosphate isomerase</fullName>
        <shortName evidence="1">IDI-2</shortName>
    </alternativeName>
</protein>